<name>CC070_BOVIN</name>
<evidence type="ECO:0000250" key="1">
    <source>
        <dbReference type="UniProtKB" id="Q1LY84"/>
    </source>
</evidence>
<evidence type="ECO:0000256" key="2">
    <source>
        <dbReference type="SAM" id="MobiDB-lite"/>
    </source>
</evidence>
<evidence type="ECO:0000305" key="3"/>
<reference key="1">
    <citation type="journal article" date="2009" name="Science">
        <title>The genome sequence of taurine cattle: a window to ruminant biology and evolution.</title>
        <authorList>
            <consortium name="The bovine genome sequencing and analysis consortium"/>
        </authorList>
    </citation>
    <scope>NUCLEOTIDE SEQUENCE [LARGE SCALE GENOMIC DNA]</scope>
    <source>
        <strain>Hereford</strain>
    </source>
</reference>
<reference key="2">
    <citation type="submission" date="2007-08" db="EMBL/GenBank/DDBJ databases">
        <authorList>
            <consortium name="NIH - Mammalian Gene Collection (MGC) project"/>
        </authorList>
    </citation>
    <scope>NUCLEOTIDE SEQUENCE [LARGE SCALE MRNA] OF 1-177</scope>
    <source>
        <strain>Hereford</strain>
        <tissue>Hypothalamus</tissue>
    </source>
</reference>
<comment type="function">
    <text evidence="1">May play a role in neuronal and neurobehavioral development.</text>
</comment>
<comment type="similarity">
    <text evidence="3">Belongs to the UPF0524 family.</text>
</comment>
<comment type="sequence caution" evidence="3">
    <conflict type="miscellaneous discrepancy">
        <sequence resource="EMBL-CDS" id="AAI51739"/>
    </conflict>
    <text>Contaminating sequence. Potential poly-A sequence.</text>
</comment>
<protein>
    <recommendedName>
        <fullName>UPF0524 protein C3orf70 homolog</fullName>
    </recommendedName>
</protein>
<keyword id="KW-0524">Neurogenesis</keyword>
<keyword id="KW-1185">Reference proteome</keyword>
<proteinExistence type="evidence at transcript level"/>
<dbReference type="EMBL" id="AAFC03076785">
    <property type="status" value="NOT_ANNOTATED_CDS"/>
    <property type="molecule type" value="Genomic_DNA"/>
</dbReference>
<dbReference type="EMBL" id="AAFC03076783">
    <property type="status" value="NOT_ANNOTATED_CDS"/>
    <property type="molecule type" value="Genomic_DNA"/>
</dbReference>
<dbReference type="EMBL" id="AAFC03033980">
    <property type="status" value="NOT_ANNOTATED_CDS"/>
    <property type="molecule type" value="Genomic_DNA"/>
</dbReference>
<dbReference type="EMBL" id="AAFC03033088">
    <property type="status" value="NOT_ANNOTATED_CDS"/>
    <property type="molecule type" value="Genomic_DNA"/>
</dbReference>
<dbReference type="EMBL" id="AAFC03033979">
    <property type="status" value="NOT_ANNOTATED_CDS"/>
    <property type="molecule type" value="Genomic_DNA"/>
</dbReference>
<dbReference type="EMBL" id="BC151738">
    <property type="protein sequence ID" value="AAI51739.1"/>
    <property type="status" value="ALT_SEQ"/>
    <property type="molecule type" value="mRNA"/>
</dbReference>
<dbReference type="RefSeq" id="NP_001181959.1">
    <property type="nucleotide sequence ID" value="NM_001195030.1"/>
</dbReference>
<dbReference type="FunCoup" id="A7E369">
    <property type="interactions" value="570"/>
</dbReference>
<dbReference type="STRING" id="9913.ENSBTAP00000006865"/>
<dbReference type="PaxDb" id="9913-ENSBTAP00000006865"/>
<dbReference type="GeneID" id="615631"/>
<dbReference type="KEGG" id="bta:615631"/>
<dbReference type="CTD" id="615631"/>
<dbReference type="VEuPathDB" id="HostDB:ENSBTAG00000005212"/>
<dbReference type="eggNOG" id="ENOG502QQSJ">
    <property type="taxonomic scope" value="Eukaryota"/>
</dbReference>
<dbReference type="HOGENOM" id="CLU_081879_0_0_1"/>
<dbReference type="InParanoid" id="A7E369"/>
<dbReference type="OMA" id="GAHKCPK"/>
<dbReference type="OrthoDB" id="8924346at2759"/>
<dbReference type="TreeFam" id="TF328625"/>
<dbReference type="Proteomes" id="UP000009136">
    <property type="component" value="Chromosome 1"/>
</dbReference>
<dbReference type="Bgee" id="ENSBTAG00000005212">
    <property type="expression patterns" value="Expressed in semen and 106 other cell types or tissues"/>
</dbReference>
<dbReference type="GO" id="GO:0048512">
    <property type="term" value="P:circadian behavior"/>
    <property type="evidence" value="ECO:0000250"/>
    <property type="project" value="UniProtKB"/>
</dbReference>
<dbReference type="GO" id="GO:0007399">
    <property type="term" value="P:nervous system development"/>
    <property type="evidence" value="ECO:0000250"/>
    <property type="project" value="UniProtKB"/>
</dbReference>
<dbReference type="InterPro" id="IPR029670">
    <property type="entry name" value="UPF0524_fam"/>
</dbReference>
<dbReference type="PANTHER" id="PTHR31785">
    <property type="entry name" value="UPF0524 PROTEIN C3ORF70"/>
    <property type="match status" value="1"/>
</dbReference>
<dbReference type="PANTHER" id="PTHR31785:SF2">
    <property type="entry name" value="UPF0524 PROTEIN C3ORF70"/>
    <property type="match status" value="1"/>
</dbReference>
<dbReference type="Pfam" id="PF15823">
    <property type="entry name" value="UPF0524"/>
    <property type="match status" value="1"/>
</dbReference>
<organism>
    <name type="scientific">Bos taurus</name>
    <name type="common">Bovine</name>
    <dbReference type="NCBI Taxonomy" id="9913"/>
    <lineage>
        <taxon>Eukaryota</taxon>
        <taxon>Metazoa</taxon>
        <taxon>Chordata</taxon>
        <taxon>Craniata</taxon>
        <taxon>Vertebrata</taxon>
        <taxon>Euteleostomi</taxon>
        <taxon>Mammalia</taxon>
        <taxon>Eutheria</taxon>
        <taxon>Laurasiatheria</taxon>
        <taxon>Artiodactyla</taxon>
        <taxon>Ruminantia</taxon>
        <taxon>Pecora</taxon>
        <taxon>Bovidae</taxon>
        <taxon>Bovinae</taxon>
        <taxon>Bos</taxon>
    </lineage>
</organism>
<feature type="chain" id="PRO_0000319975" description="UPF0524 protein C3orf70 homolog">
    <location>
        <begin position="1"/>
        <end position="250"/>
    </location>
</feature>
<feature type="region of interest" description="Disordered" evidence="2">
    <location>
        <begin position="201"/>
        <end position="250"/>
    </location>
</feature>
<feature type="compositionally biased region" description="Acidic residues" evidence="2">
    <location>
        <begin position="202"/>
        <end position="229"/>
    </location>
</feature>
<sequence length="250" mass="27665">MSAAAAPAPERGWKSEKVDEAQALARSCAARRPDFQPCDGLSICATHSHGKCFKLHWCCHLGWCHCKYVYQPMTPVEQLPSTEIPAKPREPANTIQISVSLTEHFLKFASVFQPPLPPDSPRYCMISDLFIDNYQVKCINGKMCYVQKQPAPHSHKMSPEEVSAHDAFISKESNTPKIDHCSSPSSSEDSGINAIGAHYVESCDEDTEEGAELSSEEDYSPESSWEPDECTLLSPSQSDLEVIETIETTV</sequence>
<accession>A7E369</accession>